<dbReference type="EC" id="5.1.3.20" evidence="1"/>
<dbReference type="EMBL" id="AL646052">
    <property type="protein sequence ID" value="CAD14617.1"/>
    <property type="molecule type" value="Genomic_DNA"/>
</dbReference>
<dbReference type="RefSeq" id="WP_011000867.1">
    <property type="nucleotide sequence ID" value="NC_003295.1"/>
</dbReference>
<dbReference type="SMR" id="Q8Y0X8"/>
<dbReference type="STRING" id="267608.RSc0915"/>
<dbReference type="EnsemblBacteria" id="CAD14617">
    <property type="protein sequence ID" value="CAD14617"/>
    <property type="gene ID" value="RSc0915"/>
</dbReference>
<dbReference type="KEGG" id="rso:RSc0915"/>
<dbReference type="eggNOG" id="COG0451">
    <property type="taxonomic scope" value="Bacteria"/>
</dbReference>
<dbReference type="HOGENOM" id="CLU_007383_1_3_4"/>
<dbReference type="UniPathway" id="UPA00356">
    <property type="reaction ID" value="UER00440"/>
</dbReference>
<dbReference type="Proteomes" id="UP000001436">
    <property type="component" value="Chromosome"/>
</dbReference>
<dbReference type="GO" id="GO:0008712">
    <property type="term" value="F:ADP-glyceromanno-heptose 6-epimerase activity"/>
    <property type="evidence" value="ECO:0007669"/>
    <property type="project" value="UniProtKB-UniRule"/>
</dbReference>
<dbReference type="GO" id="GO:0050661">
    <property type="term" value="F:NADP binding"/>
    <property type="evidence" value="ECO:0007669"/>
    <property type="project" value="InterPro"/>
</dbReference>
<dbReference type="GO" id="GO:0097171">
    <property type="term" value="P:ADP-L-glycero-beta-D-manno-heptose biosynthetic process"/>
    <property type="evidence" value="ECO:0007669"/>
    <property type="project" value="UniProtKB-UniPathway"/>
</dbReference>
<dbReference type="GO" id="GO:0005975">
    <property type="term" value="P:carbohydrate metabolic process"/>
    <property type="evidence" value="ECO:0007669"/>
    <property type="project" value="UniProtKB-UniRule"/>
</dbReference>
<dbReference type="CDD" id="cd05248">
    <property type="entry name" value="ADP_GME_SDR_e"/>
    <property type="match status" value="1"/>
</dbReference>
<dbReference type="Gene3D" id="3.40.50.720">
    <property type="entry name" value="NAD(P)-binding Rossmann-like Domain"/>
    <property type="match status" value="1"/>
</dbReference>
<dbReference type="Gene3D" id="3.90.25.10">
    <property type="entry name" value="UDP-galactose 4-epimerase, domain 1"/>
    <property type="match status" value="1"/>
</dbReference>
<dbReference type="HAMAP" id="MF_01601">
    <property type="entry name" value="Heptose_epimerase"/>
    <property type="match status" value="1"/>
</dbReference>
<dbReference type="InterPro" id="IPR001509">
    <property type="entry name" value="Epimerase_deHydtase"/>
</dbReference>
<dbReference type="InterPro" id="IPR011912">
    <property type="entry name" value="Heptose_epim"/>
</dbReference>
<dbReference type="InterPro" id="IPR036291">
    <property type="entry name" value="NAD(P)-bd_dom_sf"/>
</dbReference>
<dbReference type="NCBIfam" id="TIGR02197">
    <property type="entry name" value="heptose_epim"/>
    <property type="match status" value="1"/>
</dbReference>
<dbReference type="PANTHER" id="PTHR43103:SF3">
    <property type="entry name" value="ADP-L-GLYCERO-D-MANNO-HEPTOSE-6-EPIMERASE"/>
    <property type="match status" value="1"/>
</dbReference>
<dbReference type="PANTHER" id="PTHR43103">
    <property type="entry name" value="NUCLEOSIDE-DIPHOSPHATE-SUGAR EPIMERASE"/>
    <property type="match status" value="1"/>
</dbReference>
<dbReference type="Pfam" id="PF01370">
    <property type="entry name" value="Epimerase"/>
    <property type="match status" value="1"/>
</dbReference>
<dbReference type="SUPFAM" id="SSF51735">
    <property type="entry name" value="NAD(P)-binding Rossmann-fold domains"/>
    <property type="match status" value="1"/>
</dbReference>
<accession>Q8Y0X8</accession>
<protein>
    <recommendedName>
        <fullName evidence="1">ADP-L-glycero-D-manno-heptose-6-epimerase</fullName>
        <ecNumber evidence="1">5.1.3.20</ecNumber>
    </recommendedName>
    <alternativeName>
        <fullName evidence="1">ADP-L-glycero-beta-D-manno-heptose-6-epimerase</fullName>
        <shortName evidence="1">ADP-glyceromanno-heptose 6-epimerase</shortName>
        <shortName evidence="1">ADP-hep 6-epimerase</shortName>
        <shortName evidence="1">AGME</shortName>
    </alternativeName>
</protein>
<gene>
    <name evidence="1" type="primary">hldD</name>
    <name type="synonym">rfaD</name>
    <name type="ordered locus">RSc0915</name>
    <name type="ORF">RS04500</name>
</gene>
<evidence type="ECO:0000255" key="1">
    <source>
        <dbReference type="HAMAP-Rule" id="MF_01601"/>
    </source>
</evidence>
<name>HLDD_RALN1</name>
<sequence>MTIIVTGAAGFIGANLVKGLNDRGETDIIAVDNLTRADKFRNLVDCEISDYLDKTEFVERFARGDFGKVRAIFHEGACSDTMETDGRYMMENNYRYTLALMKACLDQGVQFLYASSAATYGASDTFREDREFEKPLNVYGYSKFLFDQIVRRTLPGALSQIVGFRYFNVYGPREQHKGRMASVAFHNFNQFRTEGTVKLFGEYNGYPQGGQMRDFVSVEDVVKVNLFFFDHPDKSGIFNLGTGRAQPFNDIATTVVNTLREAEGKPALSTEELAQEGLVEYVKFPDALRGKYQCFTQADQGKLRAAGYSAPFLTVQEGVARYCRWLMAQPA</sequence>
<feature type="chain" id="PRO_0000205806" description="ADP-L-glycero-D-manno-heptose-6-epimerase">
    <location>
        <begin position="1"/>
        <end position="331"/>
    </location>
</feature>
<feature type="active site" description="Proton acceptor" evidence="1">
    <location>
        <position position="139"/>
    </location>
</feature>
<feature type="active site" description="Proton acceptor" evidence="1">
    <location>
        <position position="177"/>
    </location>
</feature>
<feature type="binding site" evidence="1">
    <location>
        <begin position="11"/>
        <end position="12"/>
    </location>
    <ligand>
        <name>NADP(+)</name>
        <dbReference type="ChEBI" id="CHEBI:58349"/>
    </ligand>
</feature>
<feature type="binding site" evidence="1">
    <location>
        <begin position="32"/>
        <end position="33"/>
    </location>
    <ligand>
        <name>NADP(+)</name>
        <dbReference type="ChEBI" id="CHEBI:58349"/>
    </ligand>
</feature>
<feature type="binding site" evidence="1">
    <location>
        <position position="39"/>
    </location>
    <ligand>
        <name>NADP(+)</name>
        <dbReference type="ChEBI" id="CHEBI:58349"/>
    </ligand>
</feature>
<feature type="binding site" evidence="1">
    <location>
        <position position="54"/>
    </location>
    <ligand>
        <name>NADP(+)</name>
        <dbReference type="ChEBI" id="CHEBI:58349"/>
    </ligand>
</feature>
<feature type="binding site" evidence="1">
    <location>
        <begin position="75"/>
        <end position="79"/>
    </location>
    <ligand>
        <name>NADP(+)</name>
        <dbReference type="ChEBI" id="CHEBI:58349"/>
    </ligand>
</feature>
<feature type="binding site" evidence="1">
    <location>
        <position position="92"/>
    </location>
    <ligand>
        <name>NADP(+)</name>
        <dbReference type="ChEBI" id="CHEBI:58349"/>
    </ligand>
</feature>
<feature type="binding site" evidence="1">
    <location>
        <position position="143"/>
    </location>
    <ligand>
        <name>NADP(+)</name>
        <dbReference type="ChEBI" id="CHEBI:58349"/>
    </ligand>
</feature>
<feature type="binding site" evidence="1">
    <location>
        <position position="168"/>
    </location>
    <ligand>
        <name>substrate</name>
    </ligand>
</feature>
<feature type="binding site" evidence="1">
    <location>
        <position position="169"/>
    </location>
    <ligand>
        <name>NADP(+)</name>
        <dbReference type="ChEBI" id="CHEBI:58349"/>
    </ligand>
</feature>
<feature type="binding site" evidence="1">
    <location>
        <position position="177"/>
    </location>
    <ligand>
        <name>NADP(+)</name>
        <dbReference type="ChEBI" id="CHEBI:58349"/>
    </ligand>
</feature>
<feature type="binding site" evidence="1">
    <location>
        <position position="179"/>
    </location>
    <ligand>
        <name>substrate</name>
    </ligand>
</feature>
<feature type="binding site" evidence="1">
    <location>
        <position position="186"/>
    </location>
    <ligand>
        <name>substrate</name>
    </ligand>
</feature>
<feature type="binding site" evidence="1">
    <location>
        <begin position="200"/>
        <end position="203"/>
    </location>
    <ligand>
        <name>substrate</name>
    </ligand>
</feature>
<feature type="binding site" evidence="1">
    <location>
        <position position="213"/>
    </location>
    <ligand>
        <name>substrate</name>
    </ligand>
</feature>
<feature type="binding site" evidence="1">
    <location>
        <position position="292"/>
    </location>
    <ligand>
        <name>substrate</name>
    </ligand>
</feature>
<comment type="function">
    <text evidence="1">Catalyzes the interconversion between ADP-D-glycero-beta-D-manno-heptose and ADP-L-glycero-beta-D-manno-heptose via an epimerization at carbon 6 of the heptose.</text>
</comment>
<comment type="catalytic activity">
    <reaction evidence="1">
        <text>ADP-D-glycero-beta-D-manno-heptose = ADP-L-glycero-beta-D-manno-heptose</text>
        <dbReference type="Rhea" id="RHEA:17577"/>
        <dbReference type="ChEBI" id="CHEBI:59967"/>
        <dbReference type="ChEBI" id="CHEBI:61506"/>
        <dbReference type="EC" id="5.1.3.20"/>
    </reaction>
</comment>
<comment type="cofactor">
    <cofactor evidence="1">
        <name>NADP(+)</name>
        <dbReference type="ChEBI" id="CHEBI:58349"/>
    </cofactor>
    <text evidence="1">Binds 1 NADP(+) per subunit.</text>
</comment>
<comment type="pathway">
    <text evidence="1">Nucleotide-sugar biosynthesis; ADP-L-glycero-beta-D-manno-heptose biosynthesis; ADP-L-glycero-beta-D-manno-heptose from D-glycero-beta-D-manno-heptose 7-phosphate: step 4/4.</text>
</comment>
<comment type="subunit">
    <text evidence="1">Homopentamer.</text>
</comment>
<comment type="domain">
    <text evidence="1">Contains a large N-terminal NADP-binding domain, and a smaller C-terminal substrate-binding domain.</text>
</comment>
<comment type="similarity">
    <text evidence="1">Belongs to the NAD(P)-dependent epimerase/dehydratase family. HldD subfamily.</text>
</comment>
<proteinExistence type="inferred from homology"/>
<organism>
    <name type="scientific">Ralstonia nicotianae (strain ATCC BAA-1114 / GMI1000)</name>
    <name type="common">Ralstonia solanacearum</name>
    <dbReference type="NCBI Taxonomy" id="267608"/>
    <lineage>
        <taxon>Bacteria</taxon>
        <taxon>Pseudomonadati</taxon>
        <taxon>Pseudomonadota</taxon>
        <taxon>Betaproteobacteria</taxon>
        <taxon>Burkholderiales</taxon>
        <taxon>Burkholderiaceae</taxon>
        <taxon>Ralstonia</taxon>
        <taxon>Ralstonia solanacearum species complex</taxon>
    </lineage>
</organism>
<keyword id="KW-0119">Carbohydrate metabolism</keyword>
<keyword id="KW-0413">Isomerase</keyword>
<keyword id="KW-0521">NADP</keyword>
<keyword id="KW-1185">Reference proteome</keyword>
<reference key="1">
    <citation type="journal article" date="2002" name="Nature">
        <title>Genome sequence of the plant pathogen Ralstonia solanacearum.</title>
        <authorList>
            <person name="Salanoubat M."/>
            <person name="Genin S."/>
            <person name="Artiguenave F."/>
            <person name="Gouzy J."/>
            <person name="Mangenot S."/>
            <person name="Arlat M."/>
            <person name="Billault A."/>
            <person name="Brottier P."/>
            <person name="Camus J.-C."/>
            <person name="Cattolico L."/>
            <person name="Chandler M."/>
            <person name="Choisne N."/>
            <person name="Claudel-Renard C."/>
            <person name="Cunnac S."/>
            <person name="Demange N."/>
            <person name="Gaspin C."/>
            <person name="Lavie M."/>
            <person name="Moisan A."/>
            <person name="Robert C."/>
            <person name="Saurin W."/>
            <person name="Schiex T."/>
            <person name="Siguier P."/>
            <person name="Thebault P."/>
            <person name="Whalen M."/>
            <person name="Wincker P."/>
            <person name="Levy M."/>
            <person name="Weissenbach J."/>
            <person name="Boucher C.A."/>
        </authorList>
    </citation>
    <scope>NUCLEOTIDE SEQUENCE [LARGE SCALE GENOMIC DNA]</scope>
    <source>
        <strain>ATCC BAA-1114 / GMI1000</strain>
    </source>
</reference>